<protein>
    <recommendedName>
        <fullName>Apolipoprotein A-II</fullName>
        <shortName>Apo-AII</shortName>
        <shortName>ApoA-II</shortName>
    </recommendedName>
    <alternativeName>
        <fullName>Apolipoprotein A2</fullName>
    </alternativeName>
</protein>
<comment type="function">
    <text evidence="3">May stabilize HDL (high density lipoprotein) structure by its association with lipids, and affect the HDL metabolism.</text>
</comment>
<comment type="subunit">
    <text evidence="1 2">Homodimer; disulfide-linked (PubMed:15253869). Interacts with NAXE and NDRG1 (By similarity).</text>
</comment>
<comment type="subcellular location">
    <subcellularLocation>
        <location evidence="2">Secreted</location>
    </subcellularLocation>
</comment>
<comment type="tissue specificity">
    <text evidence="2">Plasma.</text>
</comment>
<comment type="mass spectrometry"/>
<comment type="similarity">
    <text evidence="3">Belongs to the apolipoprotein A2 family.</text>
</comment>
<sequence>QAEESCLQNLASRYLQTVTDYGKDLVEKALAPELQAQAKAYFEKTQEQLTPLVKKIGNDLLNFFSHFIELKTQPAT</sequence>
<proteinExistence type="evidence at protein level"/>
<organism>
    <name type="scientific">Equus caballus</name>
    <name type="common">Horse</name>
    <dbReference type="NCBI Taxonomy" id="9796"/>
    <lineage>
        <taxon>Eukaryota</taxon>
        <taxon>Metazoa</taxon>
        <taxon>Chordata</taxon>
        <taxon>Craniata</taxon>
        <taxon>Vertebrata</taxon>
        <taxon>Euteleostomi</taxon>
        <taxon>Mammalia</taxon>
        <taxon>Eutheria</taxon>
        <taxon>Laurasiatheria</taxon>
        <taxon>Perissodactyla</taxon>
        <taxon>Equidae</taxon>
        <taxon>Equus</taxon>
    </lineage>
</organism>
<name>APOA2_HORSE</name>
<accession>P83704</accession>
<evidence type="ECO:0000250" key="1">
    <source>
        <dbReference type="UniProtKB" id="P02652"/>
    </source>
</evidence>
<evidence type="ECO:0000269" key="2">
    <source>
    </source>
</evidence>
<evidence type="ECO:0000305" key="3"/>
<feature type="chain" id="PRO_0000181374" description="Apolipoprotein A-II">
    <location>
        <begin position="1"/>
        <end position="76"/>
    </location>
</feature>
<feature type="modified residue" description="Pyrrolidone carboxylic acid" evidence="2">
    <location>
        <position position="1"/>
    </location>
</feature>
<feature type="disulfide bond" description="Interchain" evidence="2">
    <location>
        <position position="6"/>
    </location>
</feature>
<dbReference type="SMR" id="P83704"/>
<dbReference type="STRING" id="9796.ENSECAP00000008027"/>
<dbReference type="PaxDb" id="9796-ENSECAP00000008027"/>
<dbReference type="PeptideAtlas" id="P83704"/>
<dbReference type="InParanoid" id="P83704"/>
<dbReference type="Proteomes" id="UP000002281">
    <property type="component" value="Unplaced"/>
</dbReference>
<dbReference type="GO" id="GO:0034366">
    <property type="term" value="C:spherical high-density lipoprotein particle"/>
    <property type="evidence" value="ECO:0000318"/>
    <property type="project" value="GO_Central"/>
</dbReference>
<dbReference type="GO" id="GO:0008035">
    <property type="term" value="F:high-density lipoprotein particle binding"/>
    <property type="evidence" value="ECO:0000318"/>
    <property type="project" value="GO_Central"/>
</dbReference>
<dbReference type="GO" id="GO:0008289">
    <property type="term" value="F:lipid binding"/>
    <property type="evidence" value="ECO:0007669"/>
    <property type="project" value="InterPro"/>
</dbReference>
<dbReference type="GO" id="GO:0042632">
    <property type="term" value="P:cholesterol homeostasis"/>
    <property type="evidence" value="ECO:0000318"/>
    <property type="project" value="GO_Central"/>
</dbReference>
<dbReference type="GO" id="GO:0030301">
    <property type="term" value="P:cholesterol transport"/>
    <property type="evidence" value="ECO:0000318"/>
    <property type="project" value="GO_Central"/>
</dbReference>
<dbReference type="GO" id="GO:0042157">
    <property type="term" value="P:lipoprotein metabolic process"/>
    <property type="evidence" value="ECO:0007669"/>
    <property type="project" value="InterPro"/>
</dbReference>
<dbReference type="GO" id="GO:0050766">
    <property type="term" value="P:positive regulation of phagocytosis"/>
    <property type="evidence" value="ECO:0000250"/>
    <property type="project" value="UniProtKB"/>
</dbReference>
<dbReference type="GO" id="GO:0050821">
    <property type="term" value="P:protein stabilization"/>
    <property type="evidence" value="ECO:0000250"/>
    <property type="project" value="UniProtKB"/>
</dbReference>
<dbReference type="Gene3D" id="6.10.250.100">
    <property type="match status" value="1"/>
</dbReference>
<dbReference type="InterPro" id="IPR006801">
    <property type="entry name" value="ApoA-II"/>
</dbReference>
<dbReference type="InterPro" id="IPR036172">
    <property type="entry name" value="ApoA-II_sf"/>
</dbReference>
<dbReference type="PANTHER" id="PTHR11027">
    <property type="entry name" value="APOLIPOPROTEIN A-II"/>
    <property type="match status" value="1"/>
</dbReference>
<dbReference type="PANTHER" id="PTHR11027:SF0">
    <property type="entry name" value="APOLIPOPROTEIN A-II"/>
    <property type="match status" value="1"/>
</dbReference>
<dbReference type="Pfam" id="PF04711">
    <property type="entry name" value="ApoA-II"/>
    <property type="match status" value="1"/>
</dbReference>
<dbReference type="SUPFAM" id="SSF82936">
    <property type="entry name" value="Apolipoprotein A-II"/>
    <property type="match status" value="1"/>
</dbReference>
<reference evidence="3" key="1">
    <citation type="journal article" date="2004" name="Comp. Biochem. Physiol.">
        <title>Sequence of horse (Equus caballus) apoA-II. Another example of a dimer forming apolipoprotein.</title>
        <authorList>
            <person name="Puppione D.L."/>
            <person name="Fischer W.H."/>
            <person name="Park M."/>
            <person name="Whitelegge J.P."/>
            <person name="Schumaker V.N."/>
            <person name="Golfeitz S."/>
            <person name="MacDonald M.H."/>
        </authorList>
    </citation>
    <scope>PROTEIN SEQUENCE</scope>
    <scope>SUBUNIT</scope>
    <scope>SUBCELLULAR LOCATION</scope>
    <scope>TISSUE SPECIFICITY</scope>
    <scope>MASS SPECTROMETRY</scope>
    <scope>PYROGLUTAMATE FORMATION AT GLN-1</scope>
    <scope>DISULFIDE BOND</scope>
    <source>
        <tissue evidence="2">Serum</tissue>
    </source>
</reference>
<keyword id="KW-0903">Direct protein sequencing</keyword>
<keyword id="KW-1015">Disulfide bond</keyword>
<keyword id="KW-0345">HDL</keyword>
<keyword id="KW-0445">Lipid transport</keyword>
<keyword id="KW-0873">Pyrrolidone carboxylic acid</keyword>
<keyword id="KW-1185">Reference proteome</keyword>
<keyword id="KW-0964">Secreted</keyword>
<keyword id="KW-0813">Transport</keyword>
<gene>
    <name evidence="1" type="primary">APOA2</name>
</gene>